<proteinExistence type="inferred from homology"/>
<organism>
    <name type="scientific">Yersinia enterocolitica serotype O:8 / biotype 1B (strain NCTC 13174 / 8081)</name>
    <dbReference type="NCBI Taxonomy" id="393305"/>
    <lineage>
        <taxon>Bacteria</taxon>
        <taxon>Pseudomonadati</taxon>
        <taxon>Pseudomonadota</taxon>
        <taxon>Gammaproteobacteria</taxon>
        <taxon>Enterobacterales</taxon>
        <taxon>Yersiniaceae</taxon>
        <taxon>Yersinia</taxon>
    </lineage>
</organism>
<name>RL29_YERE8</name>
<evidence type="ECO:0000255" key="1">
    <source>
        <dbReference type="HAMAP-Rule" id="MF_00374"/>
    </source>
</evidence>
<evidence type="ECO:0000305" key="2"/>
<accession>A1JS26</accession>
<protein>
    <recommendedName>
        <fullName evidence="1">Large ribosomal subunit protein uL29</fullName>
    </recommendedName>
    <alternativeName>
        <fullName evidence="2">50S ribosomal protein L29</fullName>
    </alternativeName>
</protein>
<keyword id="KW-0687">Ribonucleoprotein</keyword>
<keyword id="KW-0689">Ribosomal protein</keyword>
<sequence length="63" mass="7261">MKAQELREKSVEELNTELLNLLREQFNLRMQAASGQLQQTHLSKQVRRNIARVKTLLTEKAGA</sequence>
<gene>
    <name evidence="1" type="primary">rpmC</name>
    <name type="ordered locus">YE3915</name>
</gene>
<feature type="chain" id="PRO_1000007656" description="Large ribosomal subunit protein uL29">
    <location>
        <begin position="1"/>
        <end position="63"/>
    </location>
</feature>
<comment type="similarity">
    <text evidence="1">Belongs to the universal ribosomal protein uL29 family.</text>
</comment>
<reference key="1">
    <citation type="journal article" date="2006" name="PLoS Genet.">
        <title>The complete genome sequence and comparative genome analysis of the high pathogenicity Yersinia enterocolitica strain 8081.</title>
        <authorList>
            <person name="Thomson N.R."/>
            <person name="Howard S."/>
            <person name="Wren B.W."/>
            <person name="Holden M.T.G."/>
            <person name="Crossman L."/>
            <person name="Challis G.L."/>
            <person name="Churcher C."/>
            <person name="Mungall K."/>
            <person name="Brooks K."/>
            <person name="Chillingworth T."/>
            <person name="Feltwell T."/>
            <person name="Abdellah Z."/>
            <person name="Hauser H."/>
            <person name="Jagels K."/>
            <person name="Maddison M."/>
            <person name="Moule S."/>
            <person name="Sanders M."/>
            <person name="Whitehead S."/>
            <person name="Quail M.A."/>
            <person name="Dougan G."/>
            <person name="Parkhill J."/>
            <person name="Prentice M.B."/>
        </authorList>
    </citation>
    <scope>NUCLEOTIDE SEQUENCE [LARGE SCALE GENOMIC DNA]</scope>
    <source>
        <strain>NCTC 13174 / 8081</strain>
    </source>
</reference>
<dbReference type="EMBL" id="AM286415">
    <property type="protein sequence ID" value="CAL13934.1"/>
    <property type="molecule type" value="Genomic_DNA"/>
</dbReference>
<dbReference type="RefSeq" id="WP_005159843.1">
    <property type="nucleotide sequence ID" value="NC_008800.1"/>
</dbReference>
<dbReference type="RefSeq" id="YP_001008060.1">
    <property type="nucleotide sequence ID" value="NC_008800.1"/>
</dbReference>
<dbReference type="SMR" id="A1JS26"/>
<dbReference type="GeneID" id="97454239"/>
<dbReference type="KEGG" id="yen:YE3915"/>
<dbReference type="PATRIC" id="fig|393305.7.peg.4165"/>
<dbReference type="eggNOG" id="COG0255">
    <property type="taxonomic scope" value="Bacteria"/>
</dbReference>
<dbReference type="HOGENOM" id="CLU_158491_1_2_6"/>
<dbReference type="OrthoDB" id="9815192at2"/>
<dbReference type="Proteomes" id="UP000000642">
    <property type="component" value="Chromosome"/>
</dbReference>
<dbReference type="GO" id="GO:0022625">
    <property type="term" value="C:cytosolic large ribosomal subunit"/>
    <property type="evidence" value="ECO:0007669"/>
    <property type="project" value="TreeGrafter"/>
</dbReference>
<dbReference type="GO" id="GO:0003735">
    <property type="term" value="F:structural constituent of ribosome"/>
    <property type="evidence" value="ECO:0007669"/>
    <property type="project" value="InterPro"/>
</dbReference>
<dbReference type="GO" id="GO:0006412">
    <property type="term" value="P:translation"/>
    <property type="evidence" value="ECO:0007669"/>
    <property type="project" value="UniProtKB-UniRule"/>
</dbReference>
<dbReference type="CDD" id="cd00427">
    <property type="entry name" value="Ribosomal_L29_HIP"/>
    <property type="match status" value="1"/>
</dbReference>
<dbReference type="FunFam" id="1.10.287.310:FF:000001">
    <property type="entry name" value="50S ribosomal protein L29"/>
    <property type="match status" value="1"/>
</dbReference>
<dbReference type="Gene3D" id="1.10.287.310">
    <property type="match status" value="1"/>
</dbReference>
<dbReference type="HAMAP" id="MF_00374">
    <property type="entry name" value="Ribosomal_uL29"/>
    <property type="match status" value="1"/>
</dbReference>
<dbReference type="InterPro" id="IPR050063">
    <property type="entry name" value="Ribosomal_protein_uL29"/>
</dbReference>
<dbReference type="InterPro" id="IPR001854">
    <property type="entry name" value="Ribosomal_uL29"/>
</dbReference>
<dbReference type="InterPro" id="IPR036049">
    <property type="entry name" value="Ribosomal_uL29_sf"/>
</dbReference>
<dbReference type="NCBIfam" id="TIGR00012">
    <property type="entry name" value="L29"/>
    <property type="match status" value="1"/>
</dbReference>
<dbReference type="PANTHER" id="PTHR10916">
    <property type="entry name" value="60S RIBOSOMAL PROTEIN L35/50S RIBOSOMAL PROTEIN L29"/>
    <property type="match status" value="1"/>
</dbReference>
<dbReference type="PANTHER" id="PTHR10916:SF0">
    <property type="entry name" value="LARGE RIBOSOMAL SUBUNIT PROTEIN UL29C"/>
    <property type="match status" value="1"/>
</dbReference>
<dbReference type="Pfam" id="PF00831">
    <property type="entry name" value="Ribosomal_L29"/>
    <property type="match status" value="1"/>
</dbReference>
<dbReference type="SUPFAM" id="SSF46561">
    <property type="entry name" value="Ribosomal protein L29 (L29p)"/>
    <property type="match status" value="1"/>
</dbReference>